<evidence type="ECO:0000250" key="1"/>
<evidence type="ECO:0000305" key="2"/>
<comment type="function">
    <text evidence="1">Required for ribosome biogenesis. Part of a complex which catalyzes pseudouridylation of rRNA. This involves the isomerization of uridine such that the ribose is subsequently attached to C5, instead of the normal N1. Pseudouridine ('psi') residues may serve to stabilize the conformation of rRNAs (By similarity).</text>
</comment>
<comment type="subunit">
    <text evidence="1">Component of the small nucleolar ribonucleoprotein particle containing H/ACA-type snoRNAs (H/ACA snoRNPs).</text>
</comment>
<comment type="subcellular location">
    <subcellularLocation>
        <location evidence="1">Nucleus</location>
        <location evidence="1">Nucleolus</location>
    </subcellularLocation>
</comment>
<comment type="similarity">
    <text evidence="2">Belongs to the eukaryotic ribosomal protein eL8 family.</text>
</comment>
<keyword id="KW-0539">Nucleus</keyword>
<keyword id="KW-0687">Ribonucleoprotein</keyword>
<keyword id="KW-0690">Ribosome biogenesis</keyword>
<keyword id="KW-0694">RNA-binding</keyword>
<keyword id="KW-0698">rRNA processing</keyword>
<dbReference type="EMBL" id="AY231789">
    <property type="protein sequence ID" value="AAR09812.1"/>
    <property type="molecule type" value="mRNA"/>
</dbReference>
<dbReference type="EMBL" id="CM000159">
    <property type="protein sequence ID" value="EDW94531.1"/>
    <property type="molecule type" value="Genomic_DNA"/>
</dbReference>
<dbReference type="SMR" id="Q6XIP0"/>
<dbReference type="EnsemblMetazoa" id="FBtr0266518">
    <property type="protein sequence ID" value="FBpp0265010"/>
    <property type="gene ID" value="FBgn0068118"/>
</dbReference>
<dbReference type="EnsemblMetazoa" id="XM_002094783.4">
    <property type="protein sequence ID" value="XP_002094819.1"/>
    <property type="gene ID" value="LOC6534135"/>
</dbReference>
<dbReference type="GeneID" id="6534135"/>
<dbReference type="KEGG" id="dya:Dyak_GE20000"/>
<dbReference type="eggNOG" id="KOG3167">
    <property type="taxonomic scope" value="Eukaryota"/>
</dbReference>
<dbReference type="HOGENOM" id="CLU_084513_1_0_1"/>
<dbReference type="OMA" id="EDNYEAR"/>
<dbReference type="OrthoDB" id="5364946at2759"/>
<dbReference type="PhylomeDB" id="Q6XIP0"/>
<dbReference type="Proteomes" id="UP000002282">
    <property type="component" value="Chromosome 3L"/>
</dbReference>
<dbReference type="GO" id="GO:0005730">
    <property type="term" value="C:nucleolus"/>
    <property type="evidence" value="ECO:0007669"/>
    <property type="project" value="UniProtKB-SubCell"/>
</dbReference>
<dbReference type="GO" id="GO:0005732">
    <property type="term" value="C:sno(s)RNA-containing ribonucleoprotein complex"/>
    <property type="evidence" value="ECO:0000250"/>
    <property type="project" value="UniProtKB"/>
</dbReference>
<dbReference type="GO" id="GO:0003723">
    <property type="term" value="F:RNA binding"/>
    <property type="evidence" value="ECO:0007669"/>
    <property type="project" value="UniProtKB-KW"/>
</dbReference>
<dbReference type="GO" id="GO:0048142">
    <property type="term" value="P:germarium-derived cystoblast division"/>
    <property type="evidence" value="ECO:0007669"/>
    <property type="project" value="EnsemblMetazoa"/>
</dbReference>
<dbReference type="GO" id="GO:0031118">
    <property type="term" value="P:rRNA pseudouridine synthesis"/>
    <property type="evidence" value="ECO:0000250"/>
    <property type="project" value="UniProtKB"/>
</dbReference>
<dbReference type="FunFam" id="3.30.1330.30:FF:000028">
    <property type="entry name" value="H/ACA ribonucleoprotein complex subunit 2-like protein"/>
    <property type="match status" value="1"/>
</dbReference>
<dbReference type="Gene3D" id="3.30.1330.30">
    <property type="match status" value="1"/>
</dbReference>
<dbReference type="InterPro" id="IPR050257">
    <property type="entry name" value="eL8/uL1-like"/>
</dbReference>
<dbReference type="InterPro" id="IPR029064">
    <property type="entry name" value="Ribosomal_eL30-like_sf"/>
</dbReference>
<dbReference type="InterPro" id="IPR004038">
    <property type="entry name" value="Ribosomal_eL8/eL30/eS12/Gad45"/>
</dbReference>
<dbReference type="InterPro" id="IPR018492">
    <property type="entry name" value="Ribosomal_eL8/Nhp2"/>
</dbReference>
<dbReference type="PANTHER" id="PTHR23105">
    <property type="entry name" value="RIBOSOMAL PROTEIN L7AE FAMILY MEMBER"/>
    <property type="match status" value="1"/>
</dbReference>
<dbReference type="Pfam" id="PF01248">
    <property type="entry name" value="Ribosomal_L7Ae"/>
    <property type="match status" value="1"/>
</dbReference>
<dbReference type="PRINTS" id="PR00881">
    <property type="entry name" value="L7ARS6FAMILY"/>
</dbReference>
<dbReference type="SUPFAM" id="SSF55315">
    <property type="entry name" value="L30e-like"/>
    <property type="match status" value="1"/>
</dbReference>
<sequence>MVKVKVERSEDADESVVASGDVTIKEEESYDDKLIFVNAIAKPMAGKKLAKKCYKLVKKAMKHKTFLRNGLKDVQTRLRKGETGICIFAGDVTPVDIMCHLPAVCEEKGIPYAYTPSRADLGAAMGVKRGTVALLVRQNDEYKDLYDEVKEELSALNIPV</sequence>
<gene>
    <name type="primary">NHP2</name>
    <name type="ORF">GE20000</name>
</gene>
<accession>Q6XIP0</accession>
<accession>B4PIH4</accession>
<name>NHP2_DROYA</name>
<proteinExistence type="evidence at transcript level"/>
<reference key="1">
    <citation type="journal article" date="2003" name="Genome Res.">
        <title>An evolutionary analysis of orphan genes in Drosophila.</title>
        <authorList>
            <person name="Domazet-Loso T."/>
            <person name="Tautz D."/>
        </authorList>
    </citation>
    <scope>NUCLEOTIDE SEQUENCE [MRNA]</scope>
</reference>
<reference key="2">
    <citation type="journal article" date="2007" name="Nature">
        <title>Evolution of genes and genomes on the Drosophila phylogeny.</title>
        <authorList>
            <consortium name="Drosophila 12 genomes consortium"/>
        </authorList>
    </citation>
    <scope>NUCLEOTIDE SEQUENCE [LARGE SCALE GENOMIC DNA]</scope>
    <source>
        <strain>Tai18E2 / Tucson 14021-0261.01</strain>
    </source>
</reference>
<protein>
    <recommendedName>
        <fullName>H/ACA ribonucleoprotein complex subunit 2-like protein</fullName>
    </recommendedName>
    <alternativeName>
        <fullName>H/ACA snoRNP protein NHP2</fullName>
    </alternativeName>
</protein>
<feature type="chain" id="PRO_0000136773" description="H/ACA ribonucleoprotein complex subunit 2-like protein">
    <location>
        <begin position="1"/>
        <end position="160"/>
    </location>
</feature>
<organism>
    <name type="scientific">Drosophila yakuba</name>
    <name type="common">Fruit fly</name>
    <dbReference type="NCBI Taxonomy" id="7245"/>
    <lineage>
        <taxon>Eukaryota</taxon>
        <taxon>Metazoa</taxon>
        <taxon>Ecdysozoa</taxon>
        <taxon>Arthropoda</taxon>
        <taxon>Hexapoda</taxon>
        <taxon>Insecta</taxon>
        <taxon>Pterygota</taxon>
        <taxon>Neoptera</taxon>
        <taxon>Endopterygota</taxon>
        <taxon>Diptera</taxon>
        <taxon>Brachycera</taxon>
        <taxon>Muscomorpha</taxon>
        <taxon>Ephydroidea</taxon>
        <taxon>Drosophilidae</taxon>
        <taxon>Drosophila</taxon>
        <taxon>Sophophora</taxon>
    </lineage>
</organism>